<name>Y2238_VIBCH</name>
<feature type="chain" id="PRO_0000074644" description="UPF0294 protein VC_2238">
    <location>
        <begin position="1"/>
        <end position="281"/>
    </location>
</feature>
<reference key="1">
    <citation type="journal article" date="2000" name="Nature">
        <title>DNA sequence of both chromosomes of the cholera pathogen Vibrio cholerae.</title>
        <authorList>
            <person name="Heidelberg J.F."/>
            <person name="Eisen J.A."/>
            <person name="Nelson W.C."/>
            <person name="Clayton R.A."/>
            <person name="Gwinn M.L."/>
            <person name="Dodson R.J."/>
            <person name="Haft D.H."/>
            <person name="Hickey E.K."/>
            <person name="Peterson J.D."/>
            <person name="Umayam L.A."/>
            <person name="Gill S.R."/>
            <person name="Nelson K.E."/>
            <person name="Read T.D."/>
            <person name="Tettelin H."/>
            <person name="Richardson D.L."/>
            <person name="Ermolaeva M.D."/>
            <person name="Vamathevan J.J."/>
            <person name="Bass S."/>
            <person name="Qin H."/>
            <person name="Dragoi I."/>
            <person name="Sellers P."/>
            <person name="McDonald L.A."/>
            <person name="Utterback T.R."/>
            <person name="Fleischmann R.D."/>
            <person name="Nierman W.C."/>
            <person name="White O."/>
            <person name="Salzberg S.L."/>
            <person name="Smith H.O."/>
            <person name="Colwell R.R."/>
            <person name="Mekalanos J.J."/>
            <person name="Venter J.C."/>
            <person name="Fraser C.M."/>
        </authorList>
    </citation>
    <scope>NUCLEOTIDE SEQUENCE [LARGE SCALE GENOMIC DNA]</scope>
    <source>
        <strain>ATCC 39315 / El Tor Inaba N16961</strain>
    </source>
</reference>
<comment type="subcellular location">
    <subcellularLocation>
        <location evidence="1">Cytoplasm</location>
    </subcellularLocation>
</comment>
<comment type="similarity">
    <text evidence="1">Belongs to the UPF0294 family.</text>
</comment>
<proteinExistence type="inferred from homology"/>
<organism>
    <name type="scientific">Vibrio cholerae serotype O1 (strain ATCC 39315 / El Tor Inaba N16961)</name>
    <dbReference type="NCBI Taxonomy" id="243277"/>
    <lineage>
        <taxon>Bacteria</taxon>
        <taxon>Pseudomonadati</taxon>
        <taxon>Pseudomonadota</taxon>
        <taxon>Gammaproteobacteria</taxon>
        <taxon>Vibrionales</taxon>
        <taxon>Vibrionaceae</taxon>
        <taxon>Vibrio</taxon>
    </lineage>
</organism>
<accession>Q9KPX4</accession>
<gene>
    <name type="ordered locus">VC_2238</name>
</gene>
<protein>
    <recommendedName>
        <fullName evidence="1">UPF0294 protein VC_2238</fullName>
    </recommendedName>
</protein>
<sequence>MKKRYWMAPLLIAAAGLAAFWSIFTIPTQPELVTIGRNQQGEPLLCYQHPQSEVLDLDGELNLLVWNIYKQNRANWSTQLTELSRDQQLLLLQEANMTPAFKEWIHQLGWDGTQARAFEAFGETAGVINLAKVMPTMACAYTQLEPWLRLPKSAIYARYRLSDGQELVVVNLHAVNFTYGTQEYQQQLIALLDELRDFTGPVIVAGDFNSWSEARMALLSTQLASVGLQEVRFSPDNRTTFINGLPLDHVFYRGLQLEKAEAPISDASDHNPLLVRFRLLN</sequence>
<keyword id="KW-0963">Cytoplasm</keyword>
<keyword id="KW-1185">Reference proteome</keyword>
<evidence type="ECO:0000255" key="1">
    <source>
        <dbReference type="HAMAP-Rule" id="MF_01119"/>
    </source>
</evidence>
<dbReference type="EMBL" id="AE003852">
    <property type="protein sequence ID" value="AAF95382.1"/>
    <property type="molecule type" value="Genomic_DNA"/>
</dbReference>
<dbReference type="PIR" id="C82102">
    <property type="entry name" value="C82102"/>
</dbReference>
<dbReference type="RefSeq" id="NP_231869.1">
    <property type="nucleotide sequence ID" value="NC_002505.1"/>
</dbReference>
<dbReference type="RefSeq" id="WP_000747834.1">
    <property type="nucleotide sequence ID" value="NZ_LT906614.1"/>
</dbReference>
<dbReference type="SMR" id="Q9KPX4"/>
<dbReference type="STRING" id="243277.VC_2238"/>
<dbReference type="DNASU" id="2613160"/>
<dbReference type="EnsemblBacteria" id="AAF95382">
    <property type="protein sequence ID" value="AAF95382"/>
    <property type="gene ID" value="VC_2238"/>
</dbReference>
<dbReference type="KEGG" id="vch:VC_2238"/>
<dbReference type="PATRIC" id="fig|243277.26.peg.2135"/>
<dbReference type="eggNOG" id="COG3021">
    <property type="taxonomic scope" value="Bacteria"/>
</dbReference>
<dbReference type="HOGENOM" id="CLU_083563_0_0_6"/>
<dbReference type="Proteomes" id="UP000000584">
    <property type="component" value="Chromosome 1"/>
</dbReference>
<dbReference type="GO" id="GO:0005737">
    <property type="term" value="C:cytoplasm"/>
    <property type="evidence" value="ECO:0007669"/>
    <property type="project" value="UniProtKB-SubCell"/>
</dbReference>
<dbReference type="GO" id="GO:0003824">
    <property type="term" value="F:catalytic activity"/>
    <property type="evidence" value="ECO:0007669"/>
    <property type="project" value="InterPro"/>
</dbReference>
<dbReference type="Gene3D" id="3.60.10.10">
    <property type="entry name" value="Endonuclease/exonuclease/phosphatase"/>
    <property type="match status" value="1"/>
</dbReference>
<dbReference type="HAMAP" id="MF_01119">
    <property type="entry name" value="UPF0294"/>
    <property type="match status" value="1"/>
</dbReference>
<dbReference type="InterPro" id="IPR036691">
    <property type="entry name" value="Endo/exonu/phosph_ase_sf"/>
</dbReference>
<dbReference type="InterPro" id="IPR005135">
    <property type="entry name" value="Endo/exonuclease/phosphatase"/>
</dbReference>
<dbReference type="InterPro" id="IPR022958">
    <property type="entry name" value="UPF0294"/>
</dbReference>
<dbReference type="NCBIfam" id="NF003840">
    <property type="entry name" value="PRK05421.1-2"/>
    <property type="match status" value="1"/>
</dbReference>
<dbReference type="NCBIfam" id="NF003842">
    <property type="entry name" value="PRK05421.1-4"/>
    <property type="match status" value="1"/>
</dbReference>
<dbReference type="Pfam" id="PF03372">
    <property type="entry name" value="Exo_endo_phos"/>
    <property type="match status" value="1"/>
</dbReference>
<dbReference type="SUPFAM" id="SSF56219">
    <property type="entry name" value="DNase I-like"/>
    <property type="match status" value="1"/>
</dbReference>